<organism>
    <name type="scientific">Staphylococcus aureus (strain JH9)</name>
    <dbReference type="NCBI Taxonomy" id="359786"/>
    <lineage>
        <taxon>Bacteria</taxon>
        <taxon>Bacillati</taxon>
        <taxon>Bacillota</taxon>
        <taxon>Bacilli</taxon>
        <taxon>Bacillales</taxon>
        <taxon>Staphylococcaceae</taxon>
        <taxon>Staphylococcus</taxon>
    </lineage>
</organism>
<keyword id="KW-0963">Cytoplasm</keyword>
<keyword id="KW-0238">DNA-binding</keyword>
<keyword id="KW-0520">NAD</keyword>
<keyword id="KW-0678">Repressor</keyword>
<keyword id="KW-0804">Transcription</keyword>
<keyword id="KW-0805">Transcription regulation</keyword>
<dbReference type="EMBL" id="CP000703">
    <property type="protein sequence ID" value="ABQ49865.1"/>
    <property type="molecule type" value="Genomic_DNA"/>
</dbReference>
<dbReference type="RefSeq" id="WP_001283612.1">
    <property type="nucleotide sequence ID" value="NC_009487.1"/>
</dbReference>
<dbReference type="SMR" id="A5IUJ2"/>
<dbReference type="KEGG" id="saj:SaurJH9_2083"/>
<dbReference type="HOGENOM" id="CLU_061534_1_1_9"/>
<dbReference type="GO" id="GO:0005737">
    <property type="term" value="C:cytoplasm"/>
    <property type="evidence" value="ECO:0007669"/>
    <property type="project" value="UniProtKB-SubCell"/>
</dbReference>
<dbReference type="GO" id="GO:0003677">
    <property type="term" value="F:DNA binding"/>
    <property type="evidence" value="ECO:0007669"/>
    <property type="project" value="UniProtKB-UniRule"/>
</dbReference>
<dbReference type="GO" id="GO:0003700">
    <property type="term" value="F:DNA-binding transcription factor activity"/>
    <property type="evidence" value="ECO:0007669"/>
    <property type="project" value="UniProtKB-UniRule"/>
</dbReference>
<dbReference type="GO" id="GO:0045892">
    <property type="term" value="P:negative regulation of DNA-templated transcription"/>
    <property type="evidence" value="ECO:0007669"/>
    <property type="project" value="InterPro"/>
</dbReference>
<dbReference type="GO" id="GO:0051775">
    <property type="term" value="P:response to redox state"/>
    <property type="evidence" value="ECO:0007669"/>
    <property type="project" value="InterPro"/>
</dbReference>
<dbReference type="Gene3D" id="3.40.50.720">
    <property type="entry name" value="NAD(P)-binding Rossmann-like Domain"/>
    <property type="match status" value="1"/>
</dbReference>
<dbReference type="Gene3D" id="1.10.10.10">
    <property type="entry name" value="Winged helix-like DNA-binding domain superfamily/Winged helix DNA-binding domain"/>
    <property type="match status" value="1"/>
</dbReference>
<dbReference type="HAMAP" id="MF_01131">
    <property type="entry name" value="Rex"/>
    <property type="match status" value="1"/>
</dbReference>
<dbReference type="InterPro" id="IPR003781">
    <property type="entry name" value="CoA-bd"/>
</dbReference>
<dbReference type="InterPro" id="IPR036291">
    <property type="entry name" value="NAD(P)-bd_dom_sf"/>
</dbReference>
<dbReference type="InterPro" id="IPR009718">
    <property type="entry name" value="Rex_DNA-bd_C_dom"/>
</dbReference>
<dbReference type="InterPro" id="IPR022876">
    <property type="entry name" value="Tscrpt_rep_Rex"/>
</dbReference>
<dbReference type="InterPro" id="IPR036388">
    <property type="entry name" value="WH-like_DNA-bd_sf"/>
</dbReference>
<dbReference type="InterPro" id="IPR036390">
    <property type="entry name" value="WH_DNA-bd_sf"/>
</dbReference>
<dbReference type="NCBIfam" id="NF003989">
    <property type="entry name" value="PRK05472.1-3"/>
    <property type="match status" value="1"/>
</dbReference>
<dbReference type="NCBIfam" id="NF003991">
    <property type="entry name" value="PRK05472.1-5"/>
    <property type="match status" value="1"/>
</dbReference>
<dbReference type="NCBIfam" id="NF003994">
    <property type="entry name" value="PRK05472.2-3"/>
    <property type="match status" value="1"/>
</dbReference>
<dbReference type="NCBIfam" id="NF003995">
    <property type="entry name" value="PRK05472.2-4"/>
    <property type="match status" value="1"/>
</dbReference>
<dbReference type="NCBIfam" id="NF003996">
    <property type="entry name" value="PRK05472.2-5"/>
    <property type="match status" value="1"/>
</dbReference>
<dbReference type="PANTHER" id="PTHR35786">
    <property type="entry name" value="REDOX-SENSING TRANSCRIPTIONAL REPRESSOR REX"/>
    <property type="match status" value="1"/>
</dbReference>
<dbReference type="PANTHER" id="PTHR35786:SF1">
    <property type="entry name" value="REDOX-SENSING TRANSCRIPTIONAL REPRESSOR REX 1"/>
    <property type="match status" value="1"/>
</dbReference>
<dbReference type="Pfam" id="PF02629">
    <property type="entry name" value="CoA_binding"/>
    <property type="match status" value="1"/>
</dbReference>
<dbReference type="Pfam" id="PF06971">
    <property type="entry name" value="Put_DNA-bind_N"/>
    <property type="match status" value="1"/>
</dbReference>
<dbReference type="SMART" id="SM00881">
    <property type="entry name" value="CoA_binding"/>
    <property type="match status" value="1"/>
</dbReference>
<dbReference type="SUPFAM" id="SSF51735">
    <property type="entry name" value="NAD(P)-binding Rossmann-fold domains"/>
    <property type="match status" value="1"/>
</dbReference>
<dbReference type="SUPFAM" id="SSF46785">
    <property type="entry name" value="Winged helix' DNA-binding domain"/>
    <property type="match status" value="1"/>
</dbReference>
<protein>
    <recommendedName>
        <fullName evidence="1">Redox-sensing transcriptional repressor Rex</fullName>
    </recommendedName>
</protein>
<evidence type="ECO:0000255" key="1">
    <source>
        <dbReference type="HAMAP-Rule" id="MF_01131"/>
    </source>
</evidence>
<proteinExistence type="inferred from homology"/>
<feature type="chain" id="PRO_1000085028" description="Redox-sensing transcriptional repressor Rex">
    <location>
        <begin position="1"/>
        <end position="211"/>
    </location>
</feature>
<feature type="DNA-binding region" description="H-T-H motif" evidence="1">
    <location>
        <begin position="17"/>
        <end position="56"/>
    </location>
</feature>
<feature type="binding site" evidence="1">
    <location>
        <begin position="91"/>
        <end position="96"/>
    </location>
    <ligand>
        <name>NAD(+)</name>
        <dbReference type="ChEBI" id="CHEBI:57540"/>
    </ligand>
</feature>
<gene>
    <name evidence="1" type="primary">rex</name>
    <name type="ordered locus">SaurJH9_2083</name>
</gene>
<sequence>MSDQVKIPRATLKRLPLYYRFVSSLKSKGIDRVNSKAISDALQIDSATIRRDFSYFGELGKKGYGYNIDSLLDFFKSELSESDMIKIAIVGVGNLGKALLTYNFSIHDDMTITEAFDVKEDVIGQKIGNVIVKDNDELITTLKKEEIDVVILTTPERVAQKVADELVQAGVKGILNFTPGRINTPSDVQVHQIDLGIELQSLLFFMKNYSE</sequence>
<name>REX_STAA9</name>
<reference key="1">
    <citation type="submission" date="2007-05" db="EMBL/GenBank/DDBJ databases">
        <title>Complete sequence of chromosome of Staphylococcus aureus subsp. aureus JH9.</title>
        <authorList>
            <consortium name="US DOE Joint Genome Institute"/>
            <person name="Copeland A."/>
            <person name="Lucas S."/>
            <person name="Lapidus A."/>
            <person name="Barry K."/>
            <person name="Detter J.C."/>
            <person name="Glavina del Rio T."/>
            <person name="Hammon N."/>
            <person name="Israni S."/>
            <person name="Pitluck S."/>
            <person name="Chain P."/>
            <person name="Malfatti S."/>
            <person name="Shin M."/>
            <person name="Vergez L."/>
            <person name="Schmutz J."/>
            <person name="Larimer F."/>
            <person name="Land M."/>
            <person name="Hauser L."/>
            <person name="Kyrpides N."/>
            <person name="Kim E."/>
            <person name="Tomasz A."/>
            <person name="Richardson P."/>
        </authorList>
    </citation>
    <scope>NUCLEOTIDE SEQUENCE [LARGE SCALE GENOMIC DNA]</scope>
    <source>
        <strain>JH9</strain>
    </source>
</reference>
<comment type="function">
    <text evidence="1">Modulates transcription in response to changes in cellular NADH/NAD(+) redox state.</text>
</comment>
<comment type="subunit">
    <text evidence="1">Homodimer.</text>
</comment>
<comment type="subcellular location">
    <subcellularLocation>
        <location evidence="1">Cytoplasm</location>
    </subcellularLocation>
</comment>
<comment type="similarity">
    <text evidence="1">Belongs to the transcriptional regulatory Rex family.</text>
</comment>
<accession>A5IUJ2</accession>